<comment type="function">
    <text evidence="1 4">The small GTPases Rab are key regulators of intracellular membrane trafficking, from the formation of transport vesicles to their fusion with membranes. Rabs cycle between an inactive GDP-bound form and an active GTP-bound form that is able to recruit to membranes different set of downstream effectors directly responsible for vesicle formation, movement, tethering and fusion (By similarity). Plays a role in the initial events of the autophagic vacuole development which take place at specialized regions of the endoplasmic reticulum (By similarity). Regulates vesicular transport between the endoplasmic reticulum and successive Golgi compartments. Required to modulate the compacted morphology of the Golgi. Promotes the recruitment of lipid phosphatase MTMR6 to the endoplasmic reticulum-Golgi intermediate compartment (By similarity).</text>
</comment>
<comment type="catalytic activity">
    <reaction evidence="2">
        <text>GTP + H2O = GDP + phosphate + H(+)</text>
        <dbReference type="Rhea" id="RHEA:19669"/>
        <dbReference type="ChEBI" id="CHEBI:15377"/>
        <dbReference type="ChEBI" id="CHEBI:15378"/>
        <dbReference type="ChEBI" id="CHEBI:37565"/>
        <dbReference type="ChEBI" id="CHEBI:43474"/>
        <dbReference type="ChEBI" id="CHEBI:58189"/>
        <dbReference type="EC" id="3.6.5.2"/>
    </reaction>
    <physiologicalReaction direction="left-to-right" evidence="2">
        <dbReference type="Rhea" id="RHEA:19670"/>
    </physiologicalReaction>
</comment>
<comment type="cofactor">
    <cofactor evidence="4">
        <name>Mg(2+)</name>
        <dbReference type="ChEBI" id="CHEBI:18420"/>
    </cofactor>
</comment>
<comment type="activity regulation">
    <text evidence="4">Regulated by guanine nucleotide exchange factors (GEFs) which promote the exchange of bound GDP for free GTP. Regulated by GTPase activating proteins (GAPs) including TBC1D20 which increases the GTP hydrolysis activity. Inhibited by GDP dissociation inhibitors (GDIs).</text>
</comment>
<comment type="subunit">
    <text evidence="3 4">Interacts with MICAL1 and MICAL2. Interacts (in GTP-bound form) with MICALCL, MICAL1 and MILCAL3. Interacts with GDI1; the interaction requires the GDP-bound state. Interacts with CHM/REP1; the interaction requires the GDP-bound form and is necessary for prenylation by GGTase II. Interacts with RabGAP TBC1D20. Interacts (in GDP-bound form) with lipid phosphatase MTMR6 (via GRAM domain); the interaction regulates MTMR6 recruitment to the endoplasmic reticulum-Golgi intermediate compartment (By similarity). Interacts (in GDP-bound form) with lipid phosphatase MTMR7 (By similarity).</text>
</comment>
<comment type="subcellular location">
    <subcellularLocation>
        <location evidence="1">Cytoplasm</location>
    </subcellularLocation>
    <subcellularLocation>
        <location evidence="1">Membrane</location>
        <topology evidence="1">Lipid-anchor</topology>
        <orientation evidence="1">Cytoplasmic side</orientation>
    </subcellularLocation>
    <subcellularLocation>
        <location evidence="4">Preautophagosomal structure membrane</location>
        <topology evidence="1">Lipid-anchor</topology>
        <orientation evidence="1">Cytoplasmic side</orientation>
    </subcellularLocation>
    <subcellularLocation>
        <location evidence="1">Cytoplasm</location>
        <location evidence="1">Perinuclear region</location>
    </subcellularLocation>
    <text evidence="1 4">Targeted by REP1 to membranes of specific subcellular compartments including endoplasmic reticulum, Golgi apparatus, and intermediate vesicles between these two compartments. In the GDP-form, colocalizes with GDI in the cytoplasm (By similarity). Co-localizes with MTMR6 to the endoplasmic reticulum-Golgi intermediate compartment and to the peri-Golgi region (By similarity).</text>
</comment>
<comment type="domain">
    <text evidence="4">Switch 1, switch 2 and the interswitch regions are characteristic of Rab GTPases and mediate the interactions with Rab downstream effectors. The switch regions undergo conformational changes upon nucleotide binding which drives interaction with specific sets of effector proteins, with most effectors only binding to GTP-bound Rab.</text>
</comment>
<comment type="PTM">
    <text evidence="4">Prenylated; by GGTase II, only after interaction of the substrate with Rab escort protein 1 (REP1).</text>
</comment>
<comment type="miscellaneous">
    <text evidence="4">Rab-1B binds GTP and GDP and possesses intrinsic GTPase activity.</text>
</comment>
<comment type="similarity">
    <text evidence="7">Belongs to the small GTPase superfamily. Rab family.</text>
</comment>
<sequence length="201" mass="22171">MNPEYDYLFKLLLIGDSGVGKSCLLLRFADDTYTESYISTIGVDFKIRTIELDGKTIKLQIWDTAGQERFRTITSSYYRGAHGIIVVYDVTDQESYANVKQWLQEIDRYASENVNKLLVGNKSDLTTKKVVDNTTAKEFADSLGIPFLETSAKNATNVEQAFMTMAAEIKKRMGPGAASGGERPNLKIDSTPVKPAGGGCC</sequence>
<organism>
    <name type="scientific">Pongo abelii</name>
    <name type="common">Sumatran orangutan</name>
    <name type="synonym">Pongo pygmaeus abelii</name>
    <dbReference type="NCBI Taxonomy" id="9601"/>
    <lineage>
        <taxon>Eukaryota</taxon>
        <taxon>Metazoa</taxon>
        <taxon>Chordata</taxon>
        <taxon>Craniata</taxon>
        <taxon>Vertebrata</taxon>
        <taxon>Euteleostomi</taxon>
        <taxon>Mammalia</taxon>
        <taxon>Eutheria</taxon>
        <taxon>Euarchontoglires</taxon>
        <taxon>Primates</taxon>
        <taxon>Haplorrhini</taxon>
        <taxon>Catarrhini</taxon>
        <taxon>Hominidae</taxon>
        <taxon>Pongo</taxon>
    </lineage>
</organism>
<proteinExistence type="evidence at transcript level"/>
<dbReference type="EC" id="3.6.5.2" evidence="2"/>
<dbReference type="EMBL" id="CR857726">
    <property type="protein sequence ID" value="CAH89994.1"/>
    <property type="molecule type" value="mRNA"/>
</dbReference>
<dbReference type="RefSeq" id="NP_001127221.1">
    <property type="nucleotide sequence ID" value="NM_001133749.1"/>
</dbReference>
<dbReference type="SMR" id="Q5RE13"/>
<dbReference type="FunCoup" id="Q5RE13">
    <property type="interactions" value="2279"/>
</dbReference>
<dbReference type="STRING" id="9601.ENSPPYP00000003507"/>
<dbReference type="Ensembl" id="ENSPPYT00000003634.2">
    <property type="protein sequence ID" value="ENSPPYP00000003507.2"/>
    <property type="gene ID" value="ENSPPYG00000003031.2"/>
</dbReference>
<dbReference type="GeneID" id="100174276"/>
<dbReference type="KEGG" id="pon:100174276"/>
<dbReference type="CTD" id="81876"/>
<dbReference type="eggNOG" id="KOG0084">
    <property type="taxonomic scope" value="Eukaryota"/>
</dbReference>
<dbReference type="GeneTree" id="ENSGT00940000155078"/>
<dbReference type="InParanoid" id="Q5RE13"/>
<dbReference type="OrthoDB" id="9989112at2759"/>
<dbReference type="Proteomes" id="UP000001595">
    <property type="component" value="Chromosome 11"/>
</dbReference>
<dbReference type="GO" id="GO:0048471">
    <property type="term" value="C:perinuclear region of cytoplasm"/>
    <property type="evidence" value="ECO:0007669"/>
    <property type="project" value="UniProtKB-SubCell"/>
</dbReference>
<dbReference type="GO" id="GO:0034045">
    <property type="term" value="C:phagophore assembly site membrane"/>
    <property type="evidence" value="ECO:0007669"/>
    <property type="project" value="UniProtKB-SubCell"/>
</dbReference>
<dbReference type="GO" id="GO:0003925">
    <property type="term" value="F:G protein activity"/>
    <property type="evidence" value="ECO:0007669"/>
    <property type="project" value="UniProtKB-EC"/>
</dbReference>
<dbReference type="GO" id="GO:0005525">
    <property type="term" value="F:GTP binding"/>
    <property type="evidence" value="ECO:0000250"/>
    <property type="project" value="UniProtKB"/>
</dbReference>
<dbReference type="GO" id="GO:0006914">
    <property type="term" value="P:autophagy"/>
    <property type="evidence" value="ECO:0007669"/>
    <property type="project" value="UniProtKB-KW"/>
</dbReference>
<dbReference type="GO" id="GO:0007030">
    <property type="term" value="P:Golgi organization"/>
    <property type="evidence" value="ECO:0000250"/>
    <property type="project" value="UniProtKB"/>
</dbReference>
<dbReference type="GO" id="GO:0015031">
    <property type="term" value="P:protein transport"/>
    <property type="evidence" value="ECO:0007669"/>
    <property type="project" value="UniProtKB-KW"/>
</dbReference>
<dbReference type="CDD" id="cd01869">
    <property type="entry name" value="Rab1_Ypt1"/>
    <property type="match status" value="1"/>
</dbReference>
<dbReference type="FunFam" id="3.40.50.300:FF:000069">
    <property type="entry name" value="Ras GTP-binding protein YPT1"/>
    <property type="match status" value="1"/>
</dbReference>
<dbReference type="Gene3D" id="3.40.50.300">
    <property type="entry name" value="P-loop containing nucleotide triphosphate hydrolases"/>
    <property type="match status" value="1"/>
</dbReference>
<dbReference type="InterPro" id="IPR027417">
    <property type="entry name" value="P-loop_NTPase"/>
</dbReference>
<dbReference type="InterPro" id="IPR050227">
    <property type="entry name" value="Rab"/>
</dbReference>
<dbReference type="InterPro" id="IPR005225">
    <property type="entry name" value="Small_GTP-bd"/>
</dbReference>
<dbReference type="InterPro" id="IPR001806">
    <property type="entry name" value="Small_GTPase"/>
</dbReference>
<dbReference type="NCBIfam" id="TIGR00231">
    <property type="entry name" value="small_GTP"/>
    <property type="match status" value="1"/>
</dbReference>
<dbReference type="PANTHER" id="PTHR47977">
    <property type="entry name" value="RAS-RELATED PROTEIN RAB"/>
    <property type="match status" value="1"/>
</dbReference>
<dbReference type="Pfam" id="PF00071">
    <property type="entry name" value="Ras"/>
    <property type="match status" value="1"/>
</dbReference>
<dbReference type="PRINTS" id="PR00449">
    <property type="entry name" value="RASTRNSFRMNG"/>
</dbReference>
<dbReference type="SMART" id="SM00177">
    <property type="entry name" value="ARF"/>
    <property type="match status" value="1"/>
</dbReference>
<dbReference type="SMART" id="SM00175">
    <property type="entry name" value="RAB"/>
    <property type="match status" value="1"/>
</dbReference>
<dbReference type="SMART" id="SM00176">
    <property type="entry name" value="RAN"/>
    <property type="match status" value="1"/>
</dbReference>
<dbReference type="SMART" id="SM00173">
    <property type="entry name" value="RAS"/>
    <property type="match status" value="1"/>
</dbReference>
<dbReference type="SMART" id="SM00174">
    <property type="entry name" value="RHO"/>
    <property type="match status" value="1"/>
</dbReference>
<dbReference type="SUPFAM" id="SSF52540">
    <property type="entry name" value="P-loop containing nucleoside triphosphate hydrolases"/>
    <property type="match status" value="1"/>
</dbReference>
<dbReference type="PROSITE" id="PS51419">
    <property type="entry name" value="RAB"/>
    <property type="match status" value="1"/>
</dbReference>
<accession>Q5RE13</accession>
<keyword id="KW-0007">Acetylation</keyword>
<keyword id="KW-0072">Autophagy</keyword>
<keyword id="KW-0963">Cytoplasm</keyword>
<keyword id="KW-0342">GTP-binding</keyword>
<keyword id="KW-0378">Hydrolase</keyword>
<keyword id="KW-0449">Lipoprotein</keyword>
<keyword id="KW-0460">Magnesium</keyword>
<keyword id="KW-0472">Membrane</keyword>
<keyword id="KW-0479">Metal-binding</keyword>
<keyword id="KW-0488">Methylation</keyword>
<keyword id="KW-0547">Nucleotide-binding</keyword>
<keyword id="KW-0597">Phosphoprotein</keyword>
<keyword id="KW-0636">Prenylation</keyword>
<keyword id="KW-0653">Protein transport</keyword>
<keyword id="KW-1185">Reference proteome</keyword>
<keyword id="KW-0813">Transport</keyword>
<evidence type="ECO:0000250" key="1">
    <source>
        <dbReference type="UniProtKB" id="P10536"/>
    </source>
</evidence>
<evidence type="ECO:0000250" key="2">
    <source>
        <dbReference type="UniProtKB" id="P62820"/>
    </source>
</evidence>
<evidence type="ECO:0000250" key="3">
    <source>
        <dbReference type="UniProtKB" id="Q9D1G1"/>
    </source>
</evidence>
<evidence type="ECO:0000250" key="4">
    <source>
        <dbReference type="UniProtKB" id="Q9H0U4"/>
    </source>
</evidence>
<evidence type="ECO:0000255" key="5"/>
<evidence type="ECO:0000256" key="6">
    <source>
        <dbReference type="SAM" id="MobiDB-lite"/>
    </source>
</evidence>
<evidence type="ECO:0000305" key="7"/>
<gene>
    <name type="primary">RAB1B</name>
</gene>
<reference key="1">
    <citation type="submission" date="2004-11" db="EMBL/GenBank/DDBJ databases">
        <authorList>
            <consortium name="The German cDNA consortium"/>
        </authorList>
    </citation>
    <scope>NUCLEOTIDE SEQUENCE [LARGE SCALE MRNA]</scope>
    <source>
        <tissue>Kidney</tissue>
    </source>
</reference>
<protein>
    <recommendedName>
        <fullName>Ras-related protein Rab-1B</fullName>
        <ecNumber evidence="2">3.6.5.2</ecNumber>
    </recommendedName>
</protein>
<name>RAB1B_PONAB</name>
<feature type="chain" id="PRO_0000260522" description="Ras-related protein Rab-1B">
    <location>
        <begin position="1"/>
        <end position="201"/>
    </location>
</feature>
<feature type="region of interest" description="Switch 2 region; required for interaction with REP1/CHM" evidence="4">
    <location>
        <begin position="64"/>
        <end position="83"/>
    </location>
</feature>
<feature type="region of interest" description="Disordered" evidence="6">
    <location>
        <begin position="174"/>
        <end position="201"/>
    </location>
</feature>
<feature type="short sequence motif" description="Switch 1" evidence="4">
    <location>
        <begin position="30"/>
        <end position="45"/>
    </location>
</feature>
<feature type="short sequence motif" description="Switch 2" evidence="4">
    <location>
        <begin position="65"/>
        <end position="80"/>
    </location>
</feature>
<feature type="binding site" evidence="4">
    <location>
        <position position="17"/>
    </location>
    <ligand>
        <name>GTP</name>
        <dbReference type="ChEBI" id="CHEBI:37565"/>
    </ligand>
</feature>
<feature type="binding site" evidence="4">
    <location>
        <position position="18"/>
    </location>
    <ligand>
        <name>GTP</name>
        <dbReference type="ChEBI" id="CHEBI:37565"/>
    </ligand>
</feature>
<feature type="binding site" evidence="4">
    <location>
        <position position="19"/>
    </location>
    <ligand>
        <name>GTP</name>
        <dbReference type="ChEBI" id="CHEBI:37565"/>
    </ligand>
</feature>
<feature type="binding site" evidence="4">
    <location>
        <position position="20"/>
    </location>
    <ligand>
        <name>GTP</name>
        <dbReference type="ChEBI" id="CHEBI:37565"/>
    </ligand>
</feature>
<feature type="binding site" evidence="4">
    <location>
        <position position="21"/>
    </location>
    <ligand>
        <name>GTP</name>
        <dbReference type="ChEBI" id="CHEBI:37565"/>
    </ligand>
</feature>
<feature type="binding site" evidence="4">
    <location>
        <position position="22"/>
    </location>
    <ligand>
        <name>GTP</name>
        <dbReference type="ChEBI" id="CHEBI:37565"/>
    </ligand>
</feature>
<feature type="binding site" evidence="4">
    <location>
        <position position="22"/>
    </location>
    <ligand>
        <name>Mg(2+)</name>
        <dbReference type="ChEBI" id="CHEBI:18420"/>
    </ligand>
</feature>
<feature type="binding site" evidence="4">
    <location>
        <position position="23"/>
    </location>
    <ligand>
        <name>GTP</name>
        <dbReference type="ChEBI" id="CHEBI:37565"/>
    </ligand>
</feature>
<feature type="binding site" evidence="4">
    <location>
        <position position="33"/>
    </location>
    <ligand>
        <name>GTP</name>
        <dbReference type="ChEBI" id="CHEBI:37565"/>
    </ligand>
</feature>
<feature type="binding site" evidence="4">
    <location>
        <position position="34"/>
    </location>
    <ligand>
        <name>GTP</name>
        <dbReference type="ChEBI" id="CHEBI:37565"/>
    </ligand>
</feature>
<feature type="binding site" evidence="4">
    <location>
        <position position="35"/>
    </location>
    <ligand>
        <name>GTP</name>
        <dbReference type="ChEBI" id="CHEBI:37565"/>
    </ligand>
</feature>
<feature type="binding site" evidence="4">
    <location>
        <position position="36"/>
    </location>
    <ligand>
        <name>GTP</name>
        <dbReference type="ChEBI" id="CHEBI:37565"/>
    </ligand>
</feature>
<feature type="binding site" evidence="4">
    <location>
        <position position="39"/>
    </location>
    <ligand>
        <name>GTP</name>
        <dbReference type="ChEBI" id="CHEBI:37565"/>
    </ligand>
</feature>
<feature type="binding site" evidence="4">
    <location>
        <position position="40"/>
    </location>
    <ligand>
        <name>GTP</name>
        <dbReference type="ChEBI" id="CHEBI:37565"/>
    </ligand>
</feature>
<feature type="binding site" evidence="4">
    <location>
        <position position="40"/>
    </location>
    <ligand>
        <name>Mg(2+)</name>
        <dbReference type="ChEBI" id="CHEBI:18420"/>
    </ligand>
</feature>
<feature type="binding site" evidence="4">
    <location>
        <position position="63"/>
    </location>
    <ligand>
        <name>Mg(2+)</name>
        <dbReference type="ChEBI" id="CHEBI:18420"/>
    </ligand>
</feature>
<feature type="binding site" evidence="4">
    <location>
        <position position="66"/>
    </location>
    <ligand>
        <name>GTP</name>
        <dbReference type="ChEBI" id="CHEBI:37565"/>
    </ligand>
</feature>
<feature type="binding site" evidence="4">
    <location>
        <position position="121"/>
    </location>
    <ligand>
        <name>GTP</name>
        <dbReference type="ChEBI" id="CHEBI:37565"/>
    </ligand>
</feature>
<feature type="binding site" evidence="4">
    <location>
        <position position="122"/>
    </location>
    <ligand>
        <name>GTP</name>
        <dbReference type="ChEBI" id="CHEBI:37565"/>
    </ligand>
</feature>
<feature type="binding site" evidence="4">
    <location>
        <position position="124"/>
    </location>
    <ligand>
        <name>GTP</name>
        <dbReference type="ChEBI" id="CHEBI:37565"/>
    </ligand>
</feature>
<feature type="binding site" evidence="4">
    <location>
        <position position="151"/>
    </location>
    <ligand>
        <name>GTP</name>
        <dbReference type="ChEBI" id="CHEBI:37565"/>
    </ligand>
</feature>
<feature type="binding site" evidence="4">
    <location>
        <position position="152"/>
    </location>
    <ligand>
        <name>GTP</name>
        <dbReference type="ChEBI" id="CHEBI:37565"/>
    </ligand>
</feature>
<feature type="binding site" evidence="4">
    <location>
        <position position="153"/>
    </location>
    <ligand>
        <name>GTP</name>
        <dbReference type="ChEBI" id="CHEBI:37565"/>
    </ligand>
</feature>
<feature type="modified residue" description="N-acetylmethionine" evidence="4">
    <location>
        <position position="1"/>
    </location>
</feature>
<feature type="modified residue" description="Cysteine methyl ester" evidence="5">
    <location>
        <position position="201"/>
    </location>
</feature>
<feature type="lipid moiety-binding region" description="S-geranylgeranyl cysteine" evidence="4">
    <location>
        <position position="200"/>
    </location>
</feature>
<feature type="lipid moiety-binding region" description="S-geranylgeranyl cysteine" evidence="4">
    <location>
        <position position="201"/>
    </location>
</feature>